<comment type="function">
    <text>Removal of H(2)O(2), oxidation of toxic reductants, biosynthesis and degradation of lignin, suberization, auxin catabolism, response to environmental stresses such as wounding, pathogen attack and oxidative stress. These functions might be dependent on each isozyme/isoform in each plant tissue.</text>
</comment>
<comment type="catalytic activity">
    <reaction>
        <text>2 a phenolic donor + H2O2 = 2 a phenolic radical donor + 2 H2O</text>
        <dbReference type="Rhea" id="RHEA:56136"/>
        <dbReference type="ChEBI" id="CHEBI:15377"/>
        <dbReference type="ChEBI" id="CHEBI:16240"/>
        <dbReference type="ChEBI" id="CHEBI:139520"/>
        <dbReference type="ChEBI" id="CHEBI:139521"/>
        <dbReference type="EC" id="1.11.1.7"/>
    </reaction>
</comment>
<comment type="cofactor">
    <cofactor evidence="2">
        <name>heme b</name>
        <dbReference type="ChEBI" id="CHEBI:60344"/>
    </cofactor>
    <text evidence="2">Binds 1 heme b (iron(II)-protoporphyrin IX) group per subunit.</text>
</comment>
<comment type="cofactor">
    <cofactor evidence="2">
        <name>Ca(2+)</name>
        <dbReference type="ChEBI" id="CHEBI:29108"/>
    </cofactor>
    <text evidence="2">Binds 2 calcium ions per subunit.</text>
</comment>
<comment type="subcellular location">
    <subcellularLocation>
        <location evidence="2">Secreted</location>
    </subcellularLocation>
</comment>
<comment type="miscellaneous">
    <text>There are 73 peroxidase genes in A.thaliana.</text>
</comment>
<comment type="similarity">
    <text evidence="2">Belongs to the peroxidase family. Classical plant (class III) peroxidase subfamily.</text>
</comment>
<comment type="sequence caution" evidence="3">
    <conflict type="erroneous initiation">
        <sequence resource="EMBL-CDS" id="AAC23733"/>
    </conflict>
    <text>Extended N-terminus.</text>
</comment>
<organism>
    <name type="scientific">Arabidopsis thaliana</name>
    <name type="common">Mouse-ear cress</name>
    <dbReference type="NCBI Taxonomy" id="3702"/>
    <lineage>
        <taxon>Eukaryota</taxon>
        <taxon>Viridiplantae</taxon>
        <taxon>Streptophyta</taxon>
        <taxon>Embryophyta</taxon>
        <taxon>Tracheophyta</taxon>
        <taxon>Spermatophyta</taxon>
        <taxon>Magnoliopsida</taxon>
        <taxon>eudicotyledons</taxon>
        <taxon>Gunneridae</taxon>
        <taxon>Pentapetalae</taxon>
        <taxon>rosids</taxon>
        <taxon>malvids</taxon>
        <taxon>Brassicales</taxon>
        <taxon>Brassicaceae</taxon>
        <taxon>Camelineae</taxon>
        <taxon>Arabidopsis</taxon>
    </lineage>
</organism>
<evidence type="ECO:0000255" key="1"/>
<evidence type="ECO:0000255" key="2">
    <source>
        <dbReference type="PROSITE-ProRule" id="PRU00297"/>
    </source>
</evidence>
<evidence type="ECO:0000305" key="3"/>
<keyword id="KW-0106">Calcium</keyword>
<keyword id="KW-1015">Disulfide bond</keyword>
<keyword id="KW-0325">Glycoprotein</keyword>
<keyword id="KW-0349">Heme</keyword>
<keyword id="KW-0376">Hydrogen peroxide</keyword>
<keyword id="KW-0408">Iron</keyword>
<keyword id="KW-0479">Metal-binding</keyword>
<keyword id="KW-0560">Oxidoreductase</keyword>
<keyword id="KW-0575">Peroxidase</keyword>
<keyword id="KW-1185">Reference proteome</keyword>
<keyword id="KW-0964">Secreted</keyword>
<keyword id="KW-0732">Signal</keyword>
<protein>
    <recommendedName>
        <fullName>Peroxidase 25</fullName>
        <shortName>Atperox P25</shortName>
        <ecNumber>1.11.1.7</ecNumber>
    </recommendedName>
</protein>
<accession>O80822</accession>
<accession>F4IKW6</accession>
<accession>Q8L728</accession>
<name>PER25_ARATH</name>
<reference key="1">
    <citation type="journal article" date="1999" name="Nature">
        <title>Sequence and analysis of chromosome 2 of the plant Arabidopsis thaliana.</title>
        <authorList>
            <person name="Lin X."/>
            <person name="Kaul S."/>
            <person name="Rounsley S.D."/>
            <person name="Shea T.P."/>
            <person name="Benito M.-I."/>
            <person name="Town C.D."/>
            <person name="Fujii C.Y."/>
            <person name="Mason T.M."/>
            <person name="Bowman C.L."/>
            <person name="Barnstead M.E."/>
            <person name="Feldblyum T.V."/>
            <person name="Buell C.R."/>
            <person name="Ketchum K.A."/>
            <person name="Lee J.J."/>
            <person name="Ronning C.M."/>
            <person name="Koo H.L."/>
            <person name="Moffat K.S."/>
            <person name="Cronin L.A."/>
            <person name="Shen M."/>
            <person name="Pai G."/>
            <person name="Van Aken S."/>
            <person name="Umayam L."/>
            <person name="Tallon L.J."/>
            <person name="Gill J.E."/>
            <person name="Adams M.D."/>
            <person name="Carrera A.J."/>
            <person name="Creasy T.H."/>
            <person name="Goodman H.M."/>
            <person name="Somerville C.R."/>
            <person name="Copenhaver G.P."/>
            <person name="Preuss D."/>
            <person name="Nierman W.C."/>
            <person name="White O."/>
            <person name="Eisen J.A."/>
            <person name="Salzberg S.L."/>
            <person name="Fraser C.M."/>
            <person name="Venter J.C."/>
        </authorList>
    </citation>
    <scope>NUCLEOTIDE SEQUENCE [LARGE SCALE GENOMIC DNA]</scope>
    <source>
        <strain>cv. Columbia</strain>
    </source>
</reference>
<reference key="2">
    <citation type="journal article" date="2017" name="Plant J.">
        <title>Araport11: a complete reannotation of the Arabidopsis thaliana reference genome.</title>
        <authorList>
            <person name="Cheng C.Y."/>
            <person name="Krishnakumar V."/>
            <person name="Chan A.P."/>
            <person name="Thibaud-Nissen F."/>
            <person name="Schobel S."/>
            <person name="Town C.D."/>
        </authorList>
    </citation>
    <scope>GENOME REANNOTATION</scope>
    <source>
        <strain>cv. Columbia</strain>
    </source>
</reference>
<reference key="3">
    <citation type="journal article" date="2003" name="Science">
        <title>Empirical analysis of transcriptional activity in the Arabidopsis genome.</title>
        <authorList>
            <person name="Yamada K."/>
            <person name="Lim J."/>
            <person name="Dale J.M."/>
            <person name="Chen H."/>
            <person name="Shinn P."/>
            <person name="Palm C.J."/>
            <person name="Southwick A.M."/>
            <person name="Wu H.C."/>
            <person name="Kim C.J."/>
            <person name="Nguyen M."/>
            <person name="Pham P.K."/>
            <person name="Cheuk R.F."/>
            <person name="Karlin-Newmann G."/>
            <person name="Liu S.X."/>
            <person name="Lam B."/>
            <person name="Sakano H."/>
            <person name="Wu T."/>
            <person name="Yu G."/>
            <person name="Miranda M."/>
            <person name="Quach H.L."/>
            <person name="Tripp M."/>
            <person name="Chang C.H."/>
            <person name="Lee J.M."/>
            <person name="Toriumi M.J."/>
            <person name="Chan M.M."/>
            <person name="Tang C.C."/>
            <person name="Onodera C.S."/>
            <person name="Deng J.M."/>
            <person name="Akiyama K."/>
            <person name="Ansari Y."/>
            <person name="Arakawa T."/>
            <person name="Banh J."/>
            <person name="Banno F."/>
            <person name="Bowser L."/>
            <person name="Brooks S.Y."/>
            <person name="Carninci P."/>
            <person name="Chao Q."/>
            <person name="Choy N."/>
            <person name="Enju A."/>
            <person name="Goldsmith A.D."/>
            <person name="Gurjal M."/>
            <person name="Hansen N.F."/>
            <person name="Hayashizaki Y."/>
            <person name="Johnson-Hopson C."/>
            <person name="Hsuan V.W."/>
            <person name="Iida K."/>
            <person name="Karnes M."/>
            <person name="Khan S."/>
            <person name="Koesema E."/>
            <person name="Ishida J."/>
            <person name="Jiang P.X."/>
            <person name="Jones T."/>
            <person name="Kawai J."/>
            <person name="Kamiya A."/>
            <person name="Meyers C."/>
            <person name="Nakajima M."/>
            <person name="Narusaka M."/>
            <person name="Seki M."/>
            <person name="Sakurai T."/>
            <person name="Satou M."/>
            <person name="Tamse R."/>
            <person name="Vaysberg M."/>
            <person name="Wallender E.K."/>
            <person name="Wong C."/>
            <person name="Yamamura Y."/>
            <person name="Yuan S."/>
            <person name="Shinozaki K."/>
            <person name="Davis R.W."/>
            <person name="Theologis A."/>
            <person name="Ecker J.R."/>
        </authorList>
    </citation>
    <scope>NUCLEOTIDE SEQUENCE [LARGE SCALE MRNA]</scope>
    <source>
        <strain>cv. Columbia</strain>
    </source>
</reference>
<reference key="4">
    <citation type="journal article" date="2002" name="Gene">
        <title>Analysis and expression of the class III peroxidase large gene family in Arabidopsis thaliana.</title>
        <authorList>
            <person name="Tognolli M."/>
            <person name="Penel C."/>
            <person name="Greppin H."/>
            <person name="Simon P."/>
        </authorList>
    </citation>
    <scope>GENE FAMILY ORGANIZATION</scope>
    <scope>NOMENCLATURE</scope>
    <source>
        <strain>cv. Columbia</strain>
    </source>
</reference>
<proteinExistence type="evidence at transcript level"/>
<sequence>MGVYLGKYCYIMIIMLVLVLGKEVRSQLLKNGYYSTSCPKAESIVRSTVESHFDSDPTISPGLLRLHFHDCFVQGCDGSVLIKGKSAEQAALPNLGLRGLEVIDDAKARLEAVCPGVVSCADILALAARDSVDLSDGPSWRVPTGRKDGRISLATEASNLPSPLDSVAVQKQKFQDKGLDTHDLVTLLGAHTIGQTDCLFFRYRLYNFTVTGNSDPTISPSFLTQLKTLCPPNGDGSKRVALDIGSPSKFDESFFKNLRDGNAILESDQRLWSDAETNAVVKKYASRLRGLLGFRFDYEFGKAMIKMSSIDVKTDVDGEVRKVCSKVN</sequence>
<feature type="signal peptide" evidence="1">
    <location>
        <begin position="1"/>
        <end position="26"/>
    </location>
</feature>
<feature type="chain" id="PRO_0000023691" description="Peroxidase 25">
    <location>
        <begin position="27"/>
        <end position="328"/>
    </location>
</feature>
<feature type="active site" description="Proton acceptor">
    <location>
        <position position="69"/>
    </location>
</feature>
<feature type="binding site" evidence="2">
    <location>
        <position position="70"/>
    </location>
    <ligand>
        <name>Ca(2+)</name>
        <dbReference type="ChEBI" id="CHEBI:29108"/>
        <label>1</label>
    </ligand>
</feature>
<feature type="binding site" evidence="2">
    <location>
        <position position="73"/>
    </location>
    <ligand>
        <name>Ca(2+)</name>
        <dbReference type="ChEBI" id="CHEBI:29108"/>
        <label>1</label>
    </ligand>
</feature>
<feature type="binding site" evidence="2">
    <location>
        <position position="75"/>
    </location>
    <ligand>
        <name>Ca(2+)</name>
        <dbReference type="ChEBI" id="CHEBI:29108"/>
        <label>1</label>
    </ligand>
</feature>
<feature type="binding site" evidence="2">
    <location>
        <position position="77"/>
    </location>
    <ligand>
        <name>Ca(2+)</name>
        <dbReference type="ChEBI" id="CHEBI:29108"/>
        <label>1</label>
    </ligand>
</feature>
<feature type="binding site" evidence="2">
    <location>
        <position position="79"/>
    </location>
    <ligand>
        <name>Ca(2+)</name>
        <dbReference type="ChEBI" id="CHEBI:29108"/>
        <label>1</label>
    </ligand>
</feature>
<feature type="binding site" evidence="2">
    <location>
        <position position="161"/>
    </location>
    <ligand>
        <name>substrate</name>
    </ligand>
</feature>
<feature type="binding site" description="axial binding residue" evidence="2">
    <location>
        <position position="191"/>
    </location>
    <ligand>
        <name>heme b</name>
        <dbReference type="ChEBI" id="CHEBI:60344"/>
    </ligand>
    <ligandPart>
        <name>Fe</name>
        <dbReference type="ChEBI" id="CHEBI:18248"/>
    </ligandPart>
</feature>
<feature type="binding site" evidence="2">
    <location>
        <position position="192"/>
    </location>
    <ligand>
        <name>Ca(2+)</name>
        <dbReference type="ChEBI" id="CHEBI:29108"/>
        <label>2</label>
    </ligand>
</feature>
<feature type="binding site" evidence="2">
    <location>
        <position position="243"/>
    </location>
    <ligand>
        <name>Ca(2+)</name>
        <dbReference type="ChEBI" id="CHEBI:29108"/>
        <label>2</label>
    </ligand>
</feature>
<feature type="binding site" evidence="2">
    <location>
        <position position="246"/>
    </location>
    <ligand>
        <name>Ca(2+)</name>
        <dbReference type="ChEBI" id="CHEBI:29108"/>
        <label>2</label>
    </ligand>
</feature>
<feature type="binding site" evidence="2">
    <location>
        <position position="251"/>
    </location>
    <ligand>
        <name>Ca(2+)</name>
        <dbReference type="ChEBI" id="CHEBI:29108"/>
        <label>2</label>
    </ligand>
</feature>
<feature type="site" description="Transition state stabilizer" evidence="2">
    <location>
        <position position="65"/>
    </location>
</feature>
<feature type="glycosylation site" description="N-linked (GlcNAc...) asparagine" evidence="1">
    <location>
        <position position="207"/>
    </location>
</feature>
<feature type="disulfide bond" evidence="2">
    <location>
        <begin position="38"/>
        <end position="114"/>
    </location>
</feature>
<feature type="disulfide bond" evidence="2">
    <location>
        <begin position="71"/>
        <end position="76"/>
    </location>
</feature>
<feature type="disulfide bond" evidence="2">
    <location>
        <begin position="120"/>
        <end position="324"/>
    </location>
</feature>
<feature type="disulfide bond" evidence="2">
    <location>
        <begin position="198"/>
        <end position="230"/>
    </location>
</feature>
<dbReference type="EC" id="1.11.1.7"/>
<dbReference type="EMBL" id="AC004625">
    <property type="protein sequence ID" value="AAC23733.1"/>
    <property type="status" value="ALT_INIT"/>
    <property type="molecule type" value="Genomic_DNA"/>
</dbReference>
<dbReference type="EMBL" id="CP002685">
    <property type="protein sequence ID" value="AEC09989.2"/>
    <property type="molecule type" value="Genomic_DNA"/>
</dbReference>
<dbReference type="EMBL" id="AY139994">
    <property type="protein sequence ID" value="AAM98136.1"/>
    <property type="molecule type" value="mRNA"/>
</dbReference>
<dbReference type="EMBL" id="BT008727">
    <property type="protein sequence ID" value="AAP42740.1"/>
    <property type="molecule type" value="mRNA"/>
</dbReference>
<dbReference type="PIR" id="T02443">
    <property type="entry name" value="T02443"/>
</dbReference>
<dbReference type="RefSeq" id="NP_181679.4">
    <property type="nucleotide sequence ID" value="NM_129711.4"/>
</dbReference>
<dbReference type="SMR" id="O80822"/>
<dbReference type="FunCoup" id="O80822">
    <property type="interactions" value="224"/>
</dbReference>
<dbReference type="STRING" id="3702.O80822"/>
<dbReference type="PeroxiBase" id="118">
    <property type="entry name" value="AtPrx25"/>
</dbReference>
<dbReference type="GlyCosmos" id="O80822">
    <property type="glycosylation" value="1 site, No reported glycans"/>
</dbReference>
<dbReference type="GlyGen" id="O80822">
    <property type="glycosylation" value="1 site"/>
</dbReference>
<dbReference type="PaxDb" id="3702-AT2G41480.1"/>
<dbReference type="ProteomicsDB" id="236420"/>
<dbReference type="EnsemblPlants" id="AT2G41480.1">
    <property type="protein sequence ID" value="AT2G41480.1"/>
    <property type="gene ID" value="AT2G41480"/>
</dbReference>
<dbReference type="GeneID" id="818746"/>
<dbReference type="Gramene" id="AT2G41480.1">
    <property type="protein sequence ID" value="AT2G41480.1"/>
    <property type="gene ID" value="AT2G41480"/>
</dbReference>
<dbReference type="KEGG" id="ath:AT2G41480"/>
<dbReference type="Araport" id="AT2G41480"/>
<dbReference type="TAIR" id="AT2G41480">
    <property type="gene designation" value="PRX25"/>
</dbReference>
<dbReference type="eggNOG" id="ENOG502QQ2G">
    <property type="taxonomic scope" value="Eukaryota"/>
</dbReference>
<dbReference type="HOGENOM" id="CLU_010543_0_3_1"/>
<dbReference type="InParanoid" id="O80822"/>
<dbReference type="OMA" id="MIKMSGI"/>
<dbReference type="PhylomeDB" id="O80822"/>
<dbReference type="BioCyc" id="ARA:AT2G41480-MONOMER"/>
<dbReference type="PRO" id="PR:O80822"/>
<dbReference type="Proteomes" id="UP000006548">
    <property type="component" value="Chromosome 2"/>
</dbReference>
<dbReference type="ExpressionAtlas" id="O80822">
    <property type="expression patterns" value="baseline and differential"/>
</dbReference>
<dbReference type="GO" id="GO:0005576">
    <property type="term" value="C:extracellular region"/>
    <property type="evidence" value="ECO:0007669"/>
    <property type="project" value="UniProtKB-SubCell"/>
</dbReference>
<dbReference type="GO" id="GO:0020037">
    <property type="term" value="F:heme binding"/>
    <property type="evidence" value="ECO:0007669"/>
    <property type="project" value="InterPro"/>
</dbReference>
<dbReference type="GO" id="GO:0140825">
    <property type="term" value="F:lactoperoxidase activity"/>
    <property type="evidence" value="ECO:0007669"/>
    <property type="project" value="UniProtKB-EC"/>
</dbReference>
<dbReference type="GO" id="GO:0046872">
    <property type="term" value="F:metal ion binding"/>
    <property type="evidence" value="ECO:0007669"/>
    <property type="project" value="UniProtKB-KW"/>
</dbReference>
<dbReference type="GO" id="GO:0042744">
    <property type="term" value="P:hydrogen peroxide catabolic process"/>
    <property type="evidence" value="ECO:0007669"/>
    <property type="project" value="UniProtKB-KW"/>
</dbReference>
<dbReference type="GO" id="GO:0006979">
    <property type="term" value="P:response to oxidative stress"/>
    <property type="evidence" value="ECO:0007669"/>
    <property type="project" value="InterPro"/>
</dbReference>
<dbReference type="CDD" id="cd00693">
    <property type="entry name" value="secretory_peroxidase"/>
    <property type="match status" value="1"/>
</dbReference>
<dbReference type="FunFam" id="1.10.420.10:FF:000010">
    <property type="entry name" value="Peroxidase"/>
    <property type="match status" value="1"/>
</dbReference>
<dbReference type="FunFam" id="1.10.520.10:FF:000001">
    <property type="entry name" value="Peroxidase"/>
    <property type="match status" value="1"/>
</dbReference>
<dbReference type="Gene3D" id="1.10.520.10">
    <property type="match status" value="1"/>
</dbReference>
<dbReference type="Gene3D" id="1.10.420.10">
    <property type="entry name" value="Peroxidase, domain 2"/>
    <property type="match status" value="1"/>
</dbReference>
<dbReference type="InterPro" id="IPR002016">
    <property type="entry name" value="Haem_peroxidase"/>
</dbReference>
<dbReference type="InterPro" id="IPR010255">
    <property type="entry name" value="Haem_peroxidase_sf"/>
</dbReference>
<dbReference type="InterPro" id="IPR000823">
    <property type="entry name" value="Peroxidase_pln"/>
</dbReference>
<dbReference type="InterPro" id="IPR019794">
    <property type="entry name" value="Peroxidases_AS"/>
</dbReference>
<dbReference type="InterPro" id="IPR019793">
    <property type="entry name" value="Peroxidases_heam-ligand_BS"/>
</dbReference>
<dbReference type="InterPro" id="IPR033905">
    <property type="entry name" value="Secretory_peroxidase"/>
</dbReference>
<dbReference type="PANTHER" id="PTHR31235">
    <property type="entry name" value="PEROXIDASE 25-RELATED"/>
    <property type="match status" value="1"/>
</dbReference>
<dbReference type="Pfam" id="PF00141">
    <property type="entry name" value="peroxidase"/>
    <property type="match status" value="1"/>
</dbReference>
<dbReference type="PRINTS" id="PR00458">
    <property type="entry name" value="PEROXIDASE"/>
</dbReference>
<dbReference type="PRINTS" id="PR00461">
    <property type="entry name" value="PLPEROXIDASE"/>
</dbReference>
<dbReference type="SUPFAM" id="SSF48113">
    <property type="entry name" value="Heme-dependent peroxidases"/>
    <property type="match status" value="1"/>
</dbReference>
<dbReference type="PROSITE" id="PS00435">
    <property type="entry name" value="PEROXIDASE_1"/>
    <property type="match status" value="1"/>
</dbReference>
<dbReference type="PROSITE" id="PS00436">
    <property type="entry name" value="PEROXIDASE_2"/>
    <property type="match status" value="1"/>
</dbReference>
<dbReference type="PROSITE" id="PS50873">
    <property type="entry name" value="PEROXIDASE_4"/>
    <property type="match status" value="1"/>
</dbReference>
<gene>
    <name type="primary">PER25</name>
    <name type="synonym">P25</name>
    <name type="ordered locus">At2g41480</name>
    <name type="ORF">T26J13.7</name>
</gene>